<comment type="function">
    <text evidence="1">Reversibly transfers an adenylyl group from ATP to 4'-phosphopantetheine, yielding dephospho-CoA (dPCoA) and pyrophosphate.</text>
</comment>
<comment type="catalytic activity">
    <reaction evidence="1">
        <text>(R)-4'-phosphopantetheine + ATP + H(+) = 3'-dephospho-CoA + diphosphate</text>
        <dbReference type="Rhea" id="RHEA:19801"/>
        <dbReference type="ChEBI" id="CHEBI:15378"/>
        <dbReference type="ChEBI" id="CHEBI:30616"/>
        <dbReference type="ChEBI" id="CHEBI:33019"/>
        <dbReference type="ChEBI" id="CHEBI:57328"/>
        <dbReference type="ChEBI" id="CHEBI:61723"/>
        <dbReference type="EC" id="2.7.7.3"/>
    </reaction>
</comment>
<comment type="cofactor">
    <cofactor evidence="1">
        <name>Mg(2+)</name>
        <dbReference type="ChEBI" id="CHEBI:18420"/>
    </cofactor>
</comment>
<comment type="pathway">
    <text evidence="1">Cofactor biosynthesis; coenzyme A biosynthesis; CoA from (R)-pantothenate: step 4/5.</text>
</comment>
<comment type="subunit">
    <text evidence="1">Homohexamer.</text>
</comment>
<comment type="subcellular location">
    <subcellularLocation>
        <location evidence="1">Cytoplasm</location>
    </subcellularLocation>
</comment>
<comment type="similarity">
    <text evidence="1">Belongs to the bacterial CoaD family.</text>
</comment>
<evidence type="ECO:0000255" key="1">
    <source>
        <dbReference type="HAMAP-Rule" id="MF_00151"/>
    </source>
</evidence>
<name>COAD_XYLFA</name>
<keyword id="KW-0067">ATP-binding</keyword>
<keyword id="KW-0173">Coenzyme A biosynthesis</keyword>
<keyword id="KW-0963">Cytoplasm</keyword>
<keyword id="KW-0460">Magnesium</keyword>
<keyword id="KW-0547">Nucleotide-binding</keyword>
<keyword id="KW-0548">Nucleotidyltransferase</keyword>
<keyword id="KW-0808">Transferase</keyword>
<organism>
    <name type="scientific">Xylella fastidiosa (strain 9a5c)</name>
    <dbReference type="NCBI Taxonomy" id="160492"/>
    <lineage>
        <taxon>Bacteria</taxon>
        <taxon>Pseudomonadati</taxon>
        <taxon>Pseudomonadota</taxon>
        <taxon>Gammaproteobacteria</taxon>
        <taxon>Lysobacterales</taxon>
        <taxon>Lysobacteraceae</taxon>
        <taxon>Xylella</taxon>
    </lineage>
</organism>
<feature type="chain" id="PRO_0000156313" description="Phosphopantetheine adenylyltransferase">
    <location>
        <begin position="1"/>
        <end position="162"/>
    </location>
</feature>
<feature type="binding site" evidence="1">
    <location>
        <begin position="14"/>
        <end position="15"/>
    </location>
    <ligand>
        <name>ATP</name>
        <dbReference type="ChEBI" id="CHEBI:30616"/>
    </ligand>
</feature>
<feature type="binding site" evidence="1">
    <location>
        <position position="14"/>
    </location>
    <ligand>
        <name>substrate</name>
    </ligand>
</feature>
<feature type="binding site" evidence="1">
    <location>
        <position position="22"/>
    </location>
    <ligand>
        <name>ATP</name>
        <dbReference type="ChEBI" id="CHEBI:30616"/>
    </ligand>
</feature>
<feature type="binding site" evidence="1">
    <location>
        <position position="46"/>
    </location>
    <ligand>
        <name>substrate</name>
    </ligand>
</feature>
<feature type="binding site" evidence="1">
    <location>
        <position position="78"/>
    </location>
    <ligand>
        <name>substrate</name>
    </ligand>
</feature>
<feature type="binding site" evidence="1">
    <location>
        <position position="92"/>
    </location>
    <ligand>
        <name>substrate</name>
    </ligand>
</feature>
<feature type="binding site" evidence="1">
    <location>
        <begin position="93"/>
        <end position="95"/>
    </location>
    <ligand>
        <name>ATP</name>
        <dbReference type="ChEBI" id="CHEBI:30616"/>
    </ligand>
</feature>
<feature type="binding site" evidence="1">
    <location>
        <position position="103"/>
    </location>
    <ligand>
        <name>ATP</name>
        <dbReference type="ChEBI" id="CHEBI:30616"/>
    </ligand>
</feature>
<feature type="binding site" evidence="1">
    <location>
        <begin position="128"/>
        <end position="134"/>
    </location>
    <ligand>
        <name>ATP</name>
        <dbReference type="ChEBI" id="CHEBI:30616"/>
    </ligand>
</feature>
<feature type="site" description="Transition state stabilizer" evidence="1">
    <location>
        <position position="22"/>
    </location>
</feature>
<sequence>MSVVNRRIAVYPGTFDPITNGHIDLVSRAAPLFESIVVGVAQSPSKGPSLPLQQRVALAREALCQHENVQVIGFDTLLAHFVRHVGAGVLLRGLRAVSDFEYEFQMASMNRHLIPEVETLFLTPAEQHSFISSSLVREIARLGGDVSGFAPAAVVAALRQNL</sequence>
<dbReference type="EC" id="2.7.7.3" evidence="1"/>
<dbReference type="EMBL" id="AE003849">
    <property type="protein sequence ID" value="AAF83790.1"/>
    <property type="molecule type" value="Genomic_DNA"/>
</dbReference>
<dbReference type="PIR" id="C82738">
    <property type="entry name" value="C82738"/>
</dbReference>
<dbReference type="RefSeq" id="WP_010893499.1">
    <property type="nucleotide sequence ID" value="NC_002488.3"/>
</dbReference>
<dbReference type="SMR" id="Q9PEP8"/>
<dbReference type="STRING" id="160492.XF_0980"/>
<dbReference type="KEGG" id="xfa:XF_0980"/>
<dbReference type="eggNOG" id="COG0669">
    <property type="taxonomic scope" value="Bacteria"/>
</dbReference>
<dbReference type="HOGENOM" id="CLU_100149_0_1_6"/>
<dbReference type="UniPathway" id="UPA00241">
    <property type="reaction ID" value="UER00355"/>
</dbReference>
<dbReference type="Proteomes" id="UP000000812">
    <property type="component" value="Chromosome"/>
</dbReference>
<dbReference type="GO" id="GO:0005737">
    <property type="term" value="C:cytoplasm"/>
    <property type="evidence" value="ECO:0007669"/>
    <property type="project" value="UniProtKB-SubCell"/>
</dbReference>
<dbReference type="GO" id="GO:0005524">
    <property type="term" value="F:ATP binding"/>
    <property type="evidence" value="ECO:0007669"/>
    <property type="project" value="UniProtKB-KW"/>
</dbReference>
<dbReference type="GO" id="GO:0004595">
    <property type="term" value="F:pantetheine-phosphate adenylyltransferase activity"/>
    <property type="evidence" value="ECO:0007669"/>
    <property type="project" value="UniProtKB-UniRule"/>
</dbReference>
<dbReference type="GO" id="GO:0015937">
    <property type="term" value="P:coenzyme A biosynthetic process"/>
    <property type="evidence" value="ECO:0007669"/>
    <property type="project" value="UniProtKB-UniRule"/>
</dbReference>
<dbReference type="CDD" id="cd02163">
    <property type="entry name" value="PPAT"/>
    <property type="match status" value="1"/>
</dbReference>
<dbReference type="Gene3D" id="3.40.50.620">
    <property type="entry name" value="HUPs"/>
    <property type="match status" value="1"/>
</dbReference>
<dbReference type="HAMAP" id="MF_00151">
    <property type="entry name" value="PPAT_bact"/>
    <property type="match status" value="1"/>
</dbReference>
<dbReference type="InterPro" id="IPR004821">
    <property type="entry name" value="Cyt_trans-like"/>
</dbReference>
<dbReference type="InterPro" id="IPR001980">
    <property type="entry name" value="PPAT"/>
</dbReference>
<dbReference type="InterPro" id="IPR014729">
    <property type="entry name" value="Rossmann-like_a/b/a_fold"/>
</dbReference>
<dbReference type="NCBIfam" id="TIGR01510">
    <property type="entry name" value="coaD_prev_kdtB"/>
    <property type="match status" value="1"/>
</dbReference>
<dbReference type="NCBIfam" id="TIGR00125">
    <property type="entry name" value="cyt_tran_rel"/>
    <property type="match status" value="1"/>
</dbReference>
<dbReference type="PANTHER" id="PTHR21342">
    <property type="entry name" value="PHOSPHOPANTETHEINE ADENYLYLTRANSFERASE"/>
    <property type="match status" value="1"/>
</dbReference>
<dbReference type="PANTHER" id="PTHR21342:SF1">
    <property type="entry name" value="PHOSPHOPANTETHEINE ADENYLYLTRANSFERASE"/>
    <property type="match status" value="1"/>
</dbReference>
<dbReference type="Pfam" id="PF01467">
    <property type="entry name" value="CTP_transf_like"/>
    <property type="match status" value="1"/>
</dbReference>
<dbReference type="PRINTS" id="PR01020">
    <property type="entry name" value="LPSBIOSNTHSS"/>
</dbReference>
<dbReference type="SUPFAM" id="SSF52374">
    <property type="entry name" value="Nucleotidylyl transferase"/>
    <property type="match status" value="1"/>
</dbReference>
<gene>
    <name evidence="1" type="primary">coaD</name>
    <name type="ordered locus">XF_0980</name>
</gene>
<proteinExistence type="inferred from homology"/>
<reference key="1">
    <citation type="journal article" date="2000" name="Nature">
        <title>The genome sequence of the plant pathogen Xylella fastidiosa.</title>
        <authorList>
            <person name="Simpson A.J.G."/>
            <person name="Reinach F.C."/>
            <person name="Arruda P."/>
            <person name="Abreu F.A."/>
            <person name="Acencio M."/>
            <person name="Alvarenga R."/>
            <person name="Alves L.M.C."/>
            <person name="Araya J.E."/>
            <person name="Baia G.S."/>
            <person name="Baptista C.S."/>
            <person name="Barros M.H."/>
            <person name="Bonaccorsi E.D."/>
            <person name="Bordin S."/>
            <person name="Bove J.M."/>
            <person name="Briones M.R.S."/>
            <person name="Bueno M.R.P."/>
            <person name="Camargo A.A."/>
            <person name="Camargo L.E.A."/>
            <person name="Carraro D.M."/>
            <person name="Carrer H."/>
            <person name="Colauto N.B."/>
            <person name="Colombo C."/>
            <person name="Costa F.F."/>
            <person name="Costa M.C.R."/>
            <person name="Costa-Neto C.M."/>
            <person name="Coutinho L.L."/>
            <person name="Cristofani M."/>
            <person name="Dias-Neto E."/>
            <person name="Docena C."/>
            <person name="El-Dorry H."/>
            <person name="Facincani A.P."/>
            <person name="Ferreira A.J.S."/>
            <person name="Ferreira V.C.A."/>
            <person name="Ferro J.A."/>
            <person name="Fraga J.S."/>
            <person name="Franca S.C."/>
            <person name="Franco M.C."/>
            <person name="Frohme M."/>
            <person name="Furlan L.R."/>
            <person name="Garnier M."/>
            <person name="Goldman G.H."/>
            <person name="Goldman M.H.S."/>
            <person name="Gomes S.L."/>
            <person name="Gruber A."/>
            <person name="Ho P.L."/>
            <person name="Hoheisel J.D."/>
            <person name="Junqueira M.L."/>
            <person name="Kemper E.L."/>
            <person name="Kitajima J.P."/>
            <person name="Krieger J.E."/>
            <person name="Kuramae E.E."/>
            <person name="Laigret F."/>
            <person name="Lambais M.R."/>
            <person name="Leite L.C.C."/>
            <person name="Lemos E.G.M."/>
            <person name="Lemos M.V.F."/>
            <person name="Lopes S.A."/>
            <person name="Lopes C.R."/>
            <person name="Machado J.A."/>
            <person name="Machado M.A."/>
            <person name="Madeira A.M.B.N."/>
            <person name="Madeira H.M.F."/>
            <person name="Marino C.L."/>
            <person name="Marques M.V."/>
            <person name="Martins E.A.L."/>
            <person name="Martins E.M.F."/>
            <person name="Matsukuma A.Y."/>
            <person name="Menck C.F.M."/>
            <person name="Miracca E.C."/>
            <person name="Miyaki C.Y."/>
            <person name="Monteiro-Vitorello C.B."/>
            <person name="Moon D.H."/>
            <person name="Nagai M.A."/>
            <person name="Nascimento A.L.T.O."/>
            <person name="Netto L.E.S."/>
            <person name="Nhani A. Jr."/>
            <person name="Nobrega F.G."/>
            <person name="Nunes L.R."/>
            <person name="Oliveira M.A."/>
            <person name="de Oliveira M.C."/>
            <person name="de Oliveira R.C."/>
            <person name="Palmieri D.A."/>
            <person name="Paris A."/>
            <person name="Peixoto B.R."/>
            <person name="Pereira G.A.G."/>
            <person name="Pereira H.A. Jr."/>
            <person name="Pesquero J.B."/>
            <person name="Quaggio R.B."/>
            <person name="Roberto P.G."/>
            <person name="Rodrigues V."/>
            <person name="de Rosa A.J.M."/>
            <person name="de Rosa V.E. Jr."/>
            <person name="de Sa R.G."/>
            <person name="Santelli R.V."/>
            <person name="Sawasaki H.E."/>
            <person name="da Silva A.C.R."/>
            <person name="da Silva A.M."/>
            <person name="da Silva F.R."/>
            <person name="Silva W.A. Jr."/>
            <person name="da Silveira J.F."/>
            <person name="Silvestri M.L.Z."/>
            <person name="Siqueira W.J."/>
            <person name="de Souza A.A."/>
            <person name="de Souza A.P."/>
            <person name="Terenzi M.F."/>
            <person name="Truffi D."/>
            <person name="Tsai S.M."/>
            <person name="Tsuhako M.H."/>
            <person name="Vallada H."/>
            <person name="Van Sluys M.A."/>
            <person name="Verjovski-Almeida S."/>
            <person name="Vettore A.L."/>
            <person name="Zago M.A."/>
            <person name="Zatz M."/>
            <person name="Meidanis J."/>
            <person name="Setubal J.C."/>
        </authorList>
    </citation>
    <scope>NUCLEOTIDE SEQUENCE [LARGE SCALE GENOMIC DNA]</scope>
    <source>
        <strain>9a5c</strain>
    </source>
</reference>
<accession>Q9PEP8</accession>
<protein>
    <recommendedName>
        <fullName evidence="1">Phosphopantetheine adenylyltransferase</fullName>
        <ecNumber evidence="1">2.7.7.3</ecNumber>
    </recommendedName>
    <alternativeName>
        <fullName evidence="1">Dephospho-CoA pyrophosphorylase</fullName>
    </alternativeName>
    <alternativeName>
        <fullName evidence="1">Pantetheine-phosphate adenylyltransferase</fullName>
        <shortName evidence="1">PPAT</shortName>
    </alternativeName>
</protein>